<reference key="1">
    <citation type="journal article" date="2004" name="J. Infect. Dis.">
        <title>Progress toward characterization of the group A Streptococcus metagenome: complete genome sequence of a macrolide-resistant serotype M6 strain.</title>
        <authorList>
            <person name="Banks D.J."/>
            <person name="Porcella S.F."/>
            <person name="Barbian K.D."/>
            <person name="Beres S.B."/>
            <person name="Philips L.E."/>
            <person name="Voyich J.M."/>
            <person name="DeLeo F.R."/>
            <person name="Martin J.M."/>
            <person name="Somerville G.A."/>
            <person name="Musser J.M."/>
        </authorList>
    </citation>
    <scope>NUCLEOTIDE SEQUENCE [LARGE SCALE GENOMIC DNA]</scope>
    <source>
        <strain>ATCC BAA-946 / MGAS10394</strain>
    </source>
</reference>
<accession>Q5XA06</accession>
<name>Y1622_STRP6</name>
<feature type="chain" id="PRO_0000213023" description="UPF0340 protein M6_Spy1622">
    <location>
        <begin position="1"/>
        <end position="186"/>
    </location>
</feature>
<evidence type="ECO:0000255" key="1">
    <source>
        <dbReference type="HAMAP-Rule" id="MF_00800"/>
    </source>
</evidence>
<proteinExistence type="inferred from homology"/>
<dbReference type="EMBL" id="CP000003">
    <property type="protein sequence ID" value="AAT87757.1"/>
    <property type="molecule type" value="Genomic_DNA"/>
</dbReference>
<dbReference type="RefSeq" id="WP_002995157.1">
    <property type="nucleotide sequence ID" value="NC_006086.1"/>
</dbReference>
<dbReference type="SMR" id="Q5XA06"/>
<dbReference type="KEGG" id="spa:M6_Spy1622"/>
<dbReference type="HOGENOM" id="CLU_106658_0_0_9"/>
<dbReference type="Proteomes" id="UP000001167">
    <property type="component" value="Chromosome"/>
</dbReference>
<dbReference type="Gene3D" id="3.40.50.10360">
    <property type="entry name" value="Hypothetical protein TT1679"/>
    <property type="match status" value="1"/>
</dbReference>
<dbReference type="HAMAP" id="MF_00800">
    <property type="entry name" value="UPF0340"/>
    <property type="match status" value="1"/>
</dbReference>
<dbReference type="InterPro" id="IPR028345">
    <property type="entry name" value="Antibiotic_NAT-like"/>
</dbReference>
<dbReference type="InterPro" id="IPR006340">
    <property type="entry name" value="DUF436"/>
</dbReference>
<dbReference type="NCBIfam" id="TIGR01440">
    <property type="entry name" value="TIGR01440 family protein"/>
    <property type="match status" value="1"/>
</dbReference>
<dbReference type="Pfam" id="PF04260">
    <property type="entry name" value="DUF436"/>
    <property type="match status" value="1"/>
</dbReference>
<dbReference type="PIRSF" id="PIRSF007510">
    <property type="entry name" value="UCP007510"/>
    <property type="match status" value="1"/>
</dbReference>
<dbReference type="SUPFAM" id="SSF110710">
    <property type="entry name" value="TTHA0583/YokD-like"/>
    <property type="match status" value="1"/>
</dbReference>
<sequence>MLNNLEKQTREIVIDVVERSAIQPGNLFVLGLSSSEILGSRIGKQSSLEVGQIVVEVVLDELNKRGVHLAVQGCEHVNRALVVERHVAESKQLEIVNVVPNLHAGGSAQMAAFQLMSDPVEVEEVIAHAGLDIGDTAIGMHIKRVQIPLIPCQRELGGAHVTALASRPKLIGGARADYNMDIIRKS</sequence>
<protein>
    <recommendedName>
        <fullName evidence="1">UPF0340 protein M6_Spy1622</fullName>
    </recommendedName>
</protein>
<organism>
    <name type="scientific">Streptococcus pyogenes serotype M6 (strain ATCC BAA-946 / MGAS10394)</name>
    <dbReference type="NCBI Taxonomy" id="286636"/>
    <lineage>
        <taxon>Bacteria</taxon>
        <taxon>Bacillati</taxon>
        <taxon>Bacillota</taxon>
        <taxon>Bacilli</taxon>
        <taxon>Lactobacillales</taxon>
        <taxon>Streptococcaceae</taxon>
        <taxon>Streptococcus</taxon>
    </lineage>
</organism>
<gene>
    <name type="ordered locus">M6_Spy1622</name>
</gene>
<comment type="similarity">
    <text evidence="1">Belongs to the UPF0340 family.</text>
</comment>